<name>RS18_BUCAT</name>
<evidence type="ECO:0000255" key="1">
    <source>
        <dbReference type="HAMAP-Rule" id="MF_00270"/>
    </source>
</evidence>
<evidence type="ECO:0000305" key="2"/>
<feature type="chain" id="PRO_1000125789" description="Small ribosomal subunit protein bS18">
    <location>
        <begin position="1"/>
        <end position="75"/>
    </location>
</feature>
<organism>
    <name type="scientific">Buchnera aphidicola subsp. Acyrthosiphon pisum (strain Tuc7)</name>
    <dbReference type="NCBI Taxonomy" id="561501"/>
    <lineage>
        <taxon>Bacteria</taxon>
        <taxon>Pseudomonadati</taxon>
        <taxon>Pseudomonadota</taxon>
        <taxon>Gammaproteobacteria</taxon>
        <taxon>Enterobacterales</taxon>
        <taxon>Erwiniaceae</taxon>
        <taxon>Buchnera</taxon>
    </lineage>
</organism>
<comment type="function">
    <text evidence="1">Binds as a heterodimer with protein bS6 to the central domain of the 16S rRNA, where it helps stabilize the platform of the 30S subunit.</text>
</comment>
<comment type="subunit">
    <text evidence="1">Part of the 30S ribosomal subunit. Forms a tight heterodimer with protein bS6.</text>
</comment>
<comment type="similarity">
    <text evidence="1">Belongs to the bacterial ribosomal protein bS18 family.</text>
</comment>
<reference key="1">
    <citation type="journal article" date="2009" name="Science">
        <title>The dynamics and time scale of ongoing genomic erosion in symbiotic bacteria.</title>
        <authorList>
            <person name="Moran N.A."/>
            <person name="McLaughlin H.J."/>
            <person name="Sorek R."/>
        </authorList>
    </citation>
    <scope>NUCLEOTIDE SEQUENCE [LARGE SCALE GENOMIC DNA]</scope>
    <source>
        <strain>Tuc7</strain>
    </source>
</reference>
<sequence>MARYFRRRKFCRFTAEGVQEIDYKDIAVLKNYITESGKIVPSRITGTRAKYQRQLSRAIKRARYLALLPYTDQHR</sequence>
<dbReference type="EMBL" id="CP001158">
    <property type="protein sequence ID" value="ACL30349.1"/>
    <property type="molecule type" value="Genomic_DNA"/>
</dbReference>
<dbReference type="RefSeq" id="WP_009874511.1">
    <property type="nucleotide sequence ID" value="NC_011834.1"/>
</dbReference>
<dbReference type="SMR" id="B8D884"/>
<dbReference type="KEGG" id="bau:BUAPTUC7_557"/>
<dbReference type="HOGENOM" id="CLU_148710_2_3_6"/>
<dbReference type="GO" id="GO:0022627">
    <property type="term" value="C:cytosolic small ribosomal subunit"/>
    <property type="evidence" value="ECO:0007669"/>
    <property type="project" value="TreeGrafter"/>
</dbReference>
<dbReference type="GO" id="GO:0070181">
    <property type="term" value="F:small ribosomal subunit rRNA binding"/>
    <property type="evidence" value="ECO:0007669"/>
    <property type="project" value="TreeGrafter"/>
</dbReference>
<dbReference type="GO" id="GO:0003735">
    <property type="term" value="F:structural constituent of ribosome"/>
    <property type="evidence" value="ECO:0007669"/>
    <property type="project" value="InterPro"/>
</dbReference>
<dbReference type="GO" id="GO:0006412">
    <property type="term" value="P:translation"/>
    <property type="evidence" value="ECO:0007669"/>
    <property type="project" value="UniProtKB-UniRule"/>
</dbReference>
<dbReference type="FunFam" id="4.10.640.10:FF:000001">
    <property type="entry name" value="30S ribosomal protein S18"/>
    <property type="match status" value="1"/>
</dbReference>
<dbReference type="Gene3D" id="4.10.640.10">
    <property type="entry name" value="Ribosomal protein S18"/>
    <property type="match status" value="1"/>
</dbReference>
<dbReference type="HAMAP" id="MF_00270">
    <property type="entry name" value="Ribosomal_bS18"/>
    <property type="match status" value="1"/>
</dbReference>
<dbReference type="InterPro" id="IPR001648">
    <property type="entry name" value="Ribosomal_bS18"/>
</dbReference>
<dbReference type="InterPro" id="IPR018275">
    <property type="entry name" value="Ribosomal_bS18_CS"/>
</dbReference>
<dbReference type="InterPro" id="IPR036870">
    <property type="entry name" value="Ribosomal_bS18_sf"/>
</dbReference>
<dbReference type="NCBIfam" id="TIGR00165">
    <property type="entry name" value="S18"/>
    <property type="match status" value="1"/>
</dbReference>
<dbReference type="PANTHER" id="PTHR13479">
    <property type="entry name" value="30S RIBOSOMAL PROTEIN S18"/>
    <property type="match status" value="1"/>
</dbReference>
<dbReference type="PANTHER" id="PTHR13479:SF40">
    <property type="entry name" value="SMALL RIBOSOMAL SUBUNIT PROTEIN BS18M"/>
    <property type="match status" value="1"/>
</dbReference>
<dbReference type="Pfam" id="PF01084">
    <property type="entry name" value="Ribosomal_S18"/>
    <property type="match status" value="1"/>
</dbReference>
<dbReference type="PRINTS" id="PR00974">
    <property type="entry name" value="RIBOSOMALS18"/>
</dbReference>
<dbReference type="SUPFAM" id="SSF46911">
    <property type="entry name" value="Ribosomal protein S18"/>
    <property type="match status" value="1"/>
</dbReference>
<dbReference type="PROSITE" id="PS00057">
    <property type="entry name" value="RIBOSOMAL_S18"/>
    <property type="match status" value="1"/>
</dbReference>
<gene>
    <name evidence="1" type="primary">rpsR</name>
    <name type="ordered locus">BUAPTUC7_557</name>
</gene>
<accession>B8D884</accession>
<proteinExistence type="inferred from homology"/>
<protein>
    <recommendedName>
        <fullName evidence="1">Small ribosomal subunit protein bS18</fullName>
    </recommendedName>
    <alternativeName>
        <fullName evidence="2">30S ribosomal protein S18</fullName>
    </alternativeName>
</protein>
<keyword id="KW-0687">Ribonucleoprotein</keyword>
<keyword id="KW-0689">Ribosomal protein</keyword>
<keyword id="KW-0694">RNA-binding</keyword>
<keyword id="KW-0699">rRNA-binding</keyword>